<proteinExistence type="inferred from homology"/>
<keyword id="KW-0028">Amino-acid biosynthesis</keyword>
<keyword id="KW-0368">Histidine biosynthesis</keyword>
<keyword id="KW-0378">Hydrolase</keyword>
<keyword id="KW-0486">Methionine biosynthesis</keyword>
<keyword id="KW-0511">Multifunctional enzyme</keyword>
<keyword id="KW-0521">NADP</keyword>
<keyword id="KW-0554">One-carbon metabolism</keyword>
<keyword id="KW-0560">Oxidoreductase</keyword>
<keyword id="KW-0658">Purine biosynthesis</keyword>
<keyword id="KW-1185">Reference proteome</keyword>
<accession>Q5LNV2</accession>
<feature type="chain" id="PRO_0000268501" description="Bifunctional protein FolD 1/3">
    <location>
        <begin position="1"/>
        <end position="296"/>
    </location>
</feature>
<feature type="binding site" evidence="1">
    <location>
        <begin position="166"/>
        <end position="168"/>
    </location>
    <ligand>
        <name>NADP(+)</name>
        <dbReference type="ChEBI" id="CHEBI:58349"/>
    </ligand>
</feature>
<feature type="binding site" evidence="1">
    <location>
        <position position="191"/>
    </location>
    <ligand>
        <name>NADP(+)</name>
        <dbReference type="ChEBI" id="CHEBI:58349"/>
    </ligand>
</feature>
<feature type="binding site" evidence="1">
    <location>
        <position position="232"/>
    </location>
    <ligand>
        <name>NADP(+)</name>
        <dbReference type="ChEBI" id="CHEBI:58349"/>
    </ligand>
</feature>
<evidence type="ECO:0000255" key="1">
    <source>
        <dbReference type="HAMAP-Rule" id="MF_01576"/>
    </source>
</evidence>
<dbReference type="EC" id="1.5.1.5" evidence="1"/>
<dbReference type="EC" id="3.5.4.9" evidence="1"/>
<dbReference type="EMBL" id="CP000031">
    <property type="protein sequence ID" value="AAV96336.1"/>
    <property type="molecule type" value="Genomic_DNA"/>
</dbReference>
<dbReference type="EMBL" id="CP000031">
    <property type="protein sequence ID" value="AAV94846.1"/>
    <property type="molecule type" value="Genomic_DNA"/>
</dbReference>
<dbReference type="RefSeq" id="WP_011047296.1">
    <property type="nucleotide sequence ID" value="NC_003911.12"/>
</dbReference>
<dbReference type="SMR" id="Q5LNV2"/>
<dbReference type="STRING" id="246200.SPO1559"/>
<dbReference type="PaxDb" id="246200-SPO1559"/>
<dbReference type="KEGG" id="sil:SPO1559"/>
<dbReference type="KEGG" id="sil:SPO3101"/>
<dbReference type="eggNOG" id="COG0190">
    <property type="taxonomic scope" value="Bacteria"/>
</dbReference>
<dbReference type="HOGENOM" id="CLU_034045_1_2_5"/>
<dbReference type="OrthoDB" id="9803580at2"/>
<dbReference type="UniPathway" id="UPA00193"/>
<dbReference type="Proteomes" id="UP000001023">
    <property type="component" value="Chromosome"/>
</dbReference>
<dbReference type="GO" id="GO:0005829">
    <property type="term" value="C:cytosol"/>
    <property type="evidence" value="ECO:0007669"/>
    <property type="project" value="TreeGrafter"/>
</dbReference>
<dbReference type="GO" id="GO:0004477">
    <property type="term" value="F:methenyltetrahydrofolate cyclohydrolase activity"/>
    <property type="evidence" value="ECO:0007669"/>
    <property type="project" value="UniProtKB-UniRule"/>
</dbReference>
<dbReference type="GO" id="GO:0004488">
    <property type="term" value="F:methylenetetrahydrofolate dehydrogenase (NADP+) activity"/>
    <property type="evidence" value="ECO:0007669"/>
    <property type="project" value="UniProtKB-UniRule"/>
</dbReference>
<dbReference type="GO" id="GO:0000105">
    <property type="term" value="P:L-histidine biosynthetic process"/>
    <property type="evidence" value="ECO:0007669"/>
    <property type="project" value="UniProtKB-KW"/>
</dbReference>
<dbReference type="GO" id="GO:0009086">
    <property type="term" value="P:methionine biosynthetic process"/>
    <property type="evidence" value="ECO:0007669"/>
    <property type="project" value="UniProtKB-KW"/>
</dbReference>
<dbReference type="GO" id="GO:0006164">
    <property type="term" value="P:purine nucleotide biosynthetic process"/>
    <property type="evidence" value="ECO:0007669"/>
    <property type="project" value="UniProtKB-KW"/>
</dbReference>
<dbReference type="GO" id="GO:0035999">
    <property type="term" value="P:tetrahydrofolate interconversion"/>
    <property type="evidence" value="ECO:0007669"/>
    <property type="project" value="UniProtKB-UniRule"/>
</dbReference>
<dbReference type="CDD" id="cd01080">
    <property type="entry name" value="NAD_bind_m-THF_DH_Cyclohyd"/>
    <property type="match status" value="1"/>
</dbReference>
<dbReference type="FunFam" id="3.40.50.720:FF:000006">
    <property type="entry name" value="Bifunctional protein FolD"/>
    <property type="match status" value="1"/>
</dbReference>
<dbReference type="FunFam" id="3.40.50.10860:FF:000005">
    <property type="entry name" value="C-1-tetrahydrofolate synthase, cytoplasmic, putative"/>
    <property type="match status" value="1"/>
</dbReference>
<dbReference type="Gene3D" id="3.40.50.10860">
    <property type="entry name" value="Leucine Dehydrogenase, chain A, domain 1"/>
    <property type="match status" value="1"/>
</dbReference>
<dbReference type="Gene3D" id="3.40.50.720">
    <property type="entry name" value="NAD(P)-binding Rossmann-like Domain"/>
    <property type="match status" value="1"/>
</dbReference>
<dbReference type="HAMAP" id="MF_01576">
    <property type="entry name" value="THF_DHG_CYH"/>
    <property type="match status" value="1"/>
</dbReference>
<dbReference type="InterPro" id="IPR046346">
    <property type="entry name" value="Aminoacid_DH-like_N_sf"/>
</dbReference>
<dbReference type="InterPro" id="IPR036291">
    <property type="entry name" value="NAD(P)-bd_dom_sf"/>
</dbReference>
<dbReference type="InterPro" id="IPR000672">
    <property type="entry name" value="THF_DH/CycHdrlase"/>
</dbReference>
<dbReference type="InterPro" id="IPR020630">
    <property type="entry name" value="THF_DH/CycHdrlase_cat_dom"/>
</dbReference>
<dbReference type="InterPro" id="IPR020867">
    <property type="entry name" value="THF_DH/CycHdrlase_CS"/>
</dbReference>
<dbReference type="InterPro" id="IPR020631">
    <property type="entry name" value="THF_DH/CycHdrlase_NAD-bd_dom"/>
</dbReference>
<dbReference type="NCBIfam" id="NF008058">
    <property type="entry name" value="PRK10792.1"/>
    <property type="match status" value="1"/>
</dbReference>
<dbReference type="NCBIfam" id="NF010783">
    <property type="entry name" value="PRK14186.1"/>
    <property type="match status" value="1"/>
</dbReference>
<dbReference type="NCBIfam" id="NF010785">
    <property type="entry name" value="PRK14188.1"/>
    <property type="match status" value="1"/>
</dbReference>
<dbReference type="PANTHER" id="PTHR48099:SF5">
    <property type="entry name" value="C-1-TETRAHYDROFOLATE SYNTHASE, CYTOPLASMIC"/>
    <property type="match status" value="1"/>
</dbReference>
<dbReference type="PANTHER" id="PTHR48099">
    <property type="entry name" value="C-1-TETRAHYDROFOLATE SYNTHASE, CYTOPLASMIC-RELATED"/>
    <property type="match status" value="1"/>
</dbReference>
<dbReference type="Pfam" id="PF00763">
    <property type="entry name" value="THF_DHG_CYH"/>
    <property type="match status" value="1"/>
</dbReference>
<dbReference type="Pfam" id="PF02882">
    <property type="entry name" value="THF_DHG_CYH_C"/>
    <property type="match status" value="1"/>
</dbReference>
<dbReference type="PRINTS" id="PR00085">
    <property type="entry name" value="THFDHDRGNASE"/>
</dbReference>
<dbReference type="SUPFAM" id="SSF53223">
    <property type="entry name" value="Aminoacid dehydrogenase-like, N-terminal domain"/>
    <property type="match status" value="1"/>
</dbReference>
<dbReference type="SUPFAM" id="SSF51735">
    <property type="entry name" value="NAD(P)-binding Rossmann-fold domains"/>
    <property type="match status" value="1"/>
</dbReference>
<dbReference type="PROSITE" id="PS00766">
    <property type="entry name" value="THF_DHG_CYH_1"/>
    <property type="match status" value="1"/>
</dbReference>
<dbReference type="PROSITE" id="PS00767">
    <property type="entry name" value="THF_DHG_CYH_2"/>
    <property type="match status" value="1"/>
</dbReference>
<gene>
    <name evidence="1" type="primary">folD1</name>
    <name type="ordered locus">SPO1559</name>
</gene>
<gene>
    <name evidence="1" type="primary">folD3</name>
    <name type="ordered locus">SPO3101</name>
</gene>
<reference key="1">
    <citation type="journal article" date="2004" name="Nature">
        <title>Genome sequence of Silicibacter pomeroyi reveals adaptations to the marine environment.</title>
        <authorList>
            <person name="Moran M.A."/>
            <person name="Buchan A."/>
            <person name="Gonzalez J.M."/>
            <person name="Heidelberg J.F."/>
            <person name="Whitman W.B."/>
            <person name="Kiene R.P."/>
            <person name="Henriksen J.R."/>
            <person name="King G.M."/>
            <person name="Belas R."/>
            <person name="Fuqua C."/>
            <person name="Brinkac L.M."/>
            <person name="Lewis M."/>
            <person name="Johri S."/>
            <person name="Weaver B."/>
            <person name="Pai G."/>
            <person name="Eisen J.A."/>
            <person name="Rahe E."/>
            <person name="Sheldon W.M."/>
            <person name="Ye W."/>
            <person name="Miller T.R."/>
            <person name="Carlton J."/>
            <person name="Rasko D.A."/>
            <person name="Paulsen I.T."/>
            <person name="Ren Q."/>
            <person name="Daugherty S.C."/>
            <person name="DeBoy R.T."/>
            <person name="Dodson R.J."/>
            <person name="Durkin A.S."/>
            <person name="Madupu R."/>
            <person name="Nelson W.C."/>
            <person name="Sullivan S.A."/>
            <person name="Rosovitz M.J."/>
            <person name="Haft D.H."/>
            <person name="Selengut J."/>
            <person name="Ward N."/>
        </authorList>
    </citation>
    <scope>NUCLEOTIDE SEQUENCE [LARGE SCALE GENOMIC DNA]</scope>
    <source>
        <strain>ATCC 700808 / DSM 15171 / DSS-3</strain>
    </source>
</reference>
<reference key="2">
    <citation type="journal article" date="2014" name="Stand. Genomic Sci.">
        <title>An updated genome annotation for the model marine bacterium Ruegeria pomeroyi DSS-3.</title>
        <authorList>
            <person name="Rivers A.R."/>
            <person name="Smith C.B."/>
            <person name="Moran M.A."/>
        </authorList>
    </citation>
    <scope>GENOME REANNOTATION</scope>
    <source>
        <strain>ATCC 700808 / DSM 15171 / DSS-3</strain>
    </source>
</reference>
<name>FOLD1_RUEPO</name>
<sequence length="296" mass="30926">MAATVIDGKAFAARIRGQVAEHVAELKAGHGITPGLAVVLVGEDPASQVYVRSKGKQTVEVGMNSYEHKLDADTSEADLLALIDRLNGDPDVHGILVQLPLPGHLDEDLVINAIDPAKDVDGFHISNVGLLGTGQKSMVPCTPLGCLMMLRDHHGSLSGMDAVVIGRSNIVGKPMAQLLLGDSCTVTIAHSRTKDLADVVRRADIVVAAVGRPEMVPGDWIKPGATVIDVGINRIERDGKTRLVGDVHYDSCAQVAGAITPVPGGVGPMTIACLLANTLTACTRANKLTEPDGLTP</sequence>
<protein>
    <recommendedName>
        <fullName evidence="1">Bifunctional protein FolD 1/3</fullName>
    </recommendedName>
    <domain>
        <recommendedName>
            <fullName evidence="1">Methylenetetrahydrofolate dehydrogenase</fullName>
            <ecNumber evidence="1">1.5.1.5</ecNumber>
        </recommendedName>
    </domain>
    <domain>
        <recommendedName>
            <fullName evidence="1">Methenyltetrahydrofolate cyclohydrolase</fullName>
            <ecNumber evidence="1">3.5.4.9</ecNumber>
        </recommendedName>
    </domain>
</protein>
<organism>
    <name type="scientific">Ruegeria pomeroyi (strain ATCC 700808 / DSM 15171 / DSS-3)</name>
    <name type="common">Silicibacter pomeroyi</name>
    <dbReference type="NCBI Taxonomy" id="246200"/>
    <lineage>
        <taxon>Bacteria</taxon>
        <taxon>Pseudomonadati</taxon>
        <taxon>Pseudomonadota</taxon>
        <taxon>Alphaproteobacteria</taxon>
        <taxon>Rhodobacterales</taxon>
        <taxon>Roseobacteraceae</taxon>
        <taxon>Ruegeria</taxon>
    </lineage>
</organism>
<comment type="function">
    <text evidence="1">Catalyzes the oxidation of 5,10-methylenetetrahydrofolate to 5,10-methenyltetrahydrofolate and then the hydrolysis of 5,10-methenyltetrahydrofolate to 10-formyltetrahydrofolate.</text>
</comment>
<comment type="catalytic activity">
    <reaction evidence="1">
        <text>(6R)-5,10-methylene-5,6,7,8-tetrahydrofolate + NADP(+) = (6R)-5,10-methenyltetrahydrofolate + NADPH</text>
        <dbReference type="Rhea" id="RHEA:22812"/>
        <dbReference type="ChEBI" id="CHEBI:15636"/>
        <dbReference type="ChEBI" id="CHEBI:57455"/>
        <dbReference type="ChEBI" id="CHEBI:57783"/>
        <dbReference type="ChEBI" id="CHEBI:58349"/>
        <dbReference type="EC" id="1.5.1.5"/>
    </reaction>
</comment>
<comment type="catalytic activity">
    <reaction evidence="1">
        <text>(6R)-5,10-methenyltetrahydrofolate + H2O = (6R)-10-formyltetrahydrofolate + H(+)</text>
        <dbReference type="Rhea" id="RHEA:23700"/>
        <dbReference type="ChEBI" id="CHEBI:15377"/>
        <dbReference type="ChEBI" id="CHEBI:15378"/>
        <dbReference type="ChEBI" id="CHEBI:57455"/>
        <dbReference type="ChEBI" id="CHEBI:195366"/>
        <dbReference type="EC" id="3.5.4.9"/>
    </reaction>
</comment>
<comment type="pathway">
    <text evidence="1">One-carbon metabolism; tetrahydrofolate interconversion.</text>
</comment>
<comment type="subunit">
    <text evidence="1">Homodimer.</text>
</comment>
<comment type="similarity">
    <text evidence="1">Belongs to the tetrahydrofolate dehydrogenase/cyclohydrolase family.</text>
</comment>